<gene>
    <name evidence="1" type="primary">glmM</name>
    <name type="ordered locus">YpsIP31758_3600</name>
</gene>
<accession>A7FMS6</accession>
<keyword id="KW-0413">Isomerase</keyword>
<keyword id="KW-0460">Magnesium</keyword>
<keyword id="KW-0479">Metal-binding</keyword>
<keyword id="KW-0597">Phosphoprotein</keyword>
<protein>
    <recommendedName>
        <fullName evidence="1">Phosphoglucosamine mutase</fullName>
        <ecNumber evidence="1">5.4.2.10</ecNumber>
    </recommendedName>
</protein>
<reference key="1">
    <citation type="journal article" date="2007" name="PLoS Genet.">
        <title>The complete genome sequence of Yersinia pseudotuberculosis IP31758, the causative agent of Far East scarlet-like fever.</title>
        <authorList>
            <person name="Eppinger M."/>
            <person name="Rosovitz M.J."/>
            <person name="Fricke W.F."/>
            <person name="Rasko D.A."/>
            <person name="Kokorina G."/>
            <person name="Fayolle C."/>
            <person name="Lindler L.E."/>
            <person name="Carniel E."/>
            <person name="Ravel J."/>
        </authorList>
    </citation>
    <scope>NUCLEOTIDE SEQUENCE [LARGE SCALE GENOMIC DNA]</scope>
    <source>
        <strain>IP 31758</strain>
    </source>
</reference>
<feature type="chain" id="PRO_1000068920" description="Phosphoglucosamine mutase">
    <location>
        <begin position="1"/>
        <end position="446"/>
    </location>
</feature>
<feature type="active site" description="Phosphoserine intermediate" evidence="1">
    <location>
        <position position="102"/>
    </location>
</feature>
<feature type="binding site" description="via phosphate group" evidence="1">
    <location>
        <position position="102"/>
    </location>
    <ligand>
        <name>Mg(2+)</name>
        <dbReference type="ChEBI" id="CHEBI:18420"/>
    </ligand>
</feature>
<feature type="binding site" evidence="1">
    <location>
        <position position="241"/>
    </location>
    <ligand>
        <name>Mg(2+)</name>
        <dbReference type="ChEBI" id="CHEBI:18420"/>
    </ligand>
</feature>
<feature type="binding site" evidence="1">
    <location>
        <position position="243"/>
    </location>
    <ligand>
        <name>Mg(2+)</name>
        <dbReference type="ChEBI" id="CHEBI:18420"/>
    </ligand>
</feature>
<feature type="binding site" evidence="1">
    <location>
        <position position="245"/>
    </location>
    <ligand>
        <name>Mg(2+)</name>
        <dbReference type="ChEBI" id="CHEBI:18420"/>
    </ligand>
</feature>
<feature type="modified residue" description="Phosphoserine" evidence="1">
    <location>
        <position position="102"/>
    </location>
</feature>
<evidence type="ECO:0000255" key="1">
    <source>
        <dbReference type="HAMAP-Rule" id="MF_01554"/>
    </source>
</evidence>
<proteinExistence type="inferred from homology"/>
<comment type="function">
    <text evidence="1">Catalyzes the conversion of glucosamine-6-phosphate to glucosamine-1-phosphate.</text>
</comment>
<comment type="catalytic activity">
    <reaction evidence="1">
        <text>alpha-D-glucosamine 1-phosphate = D-glucosamine 6-phosphate</text>
        <dbReference type="Rhea" id="RHEA:23424"/>
        <dbReference type="ChEBI" id="CHEBI:58516"/>
        <dbReference type="ChEBI" id="CHEBI:58725"/>
        <dbReference type="EC" id="5.4.2.10"/>
    </reaction>
</comment>
<comment type="cofactor">
    <cofactor evidence="1">
        <name>Mg(2+)</name>
        <dbReference type="ChEBI" id="CHEBI:18420"/>
    </cofactor>
    <text evidence="1">Binds 1 Mg(2+) ion per subunit.</text>
</comment>
<comment type="PTM">
    <text evidence="1">Activated by phosphorylation.</text>
</comment>
<comment type="similarity">
    <text evidence="1">Belongs to the phosphohexose mutase family.</text>
</comment>
<sequence>MSNRKYFGTDGIRGKVGESPITPDFVLKLGWAAGKVLARHGSRKIIIGKDTRISGYMLESALEAGLAAAGLSALFTGPMPTPAVAYLTRTFRAEAGIVISASHNPFYDNGIKFFSIDGTKLPDDVEEAIEAEMEKPLTCVESAELGKANRIVDAAGRYIEFCKGTFPSELSLNELKIVVDCANGATYHIAPSVLRELGATVITIGCEPDGMNINEECGATDVRLLQERVLAEGAHVGLAFDGDGDRLMMVDHLGNKVDGDQILYIIAREGLRQGQLKGGAVGTLMSNMGLQLALKDLGIPFVRAKVGDRYVLEAMQEKGWRIGAENSGHVILLDKTTTGDGIVAGLQVLTAMVRNHMSLHDLCSGMKLLPQILVNVRFSGEHNPLKSDEVEEVTRQVEKELGGRGRVLLRKSGTEPLIRVMVEGDAEESLIAEMANRIADAVKAAG</sequence>
<dbReference type="EC" id="5.4.2.10" evidence="1"/>
<dbReference type="EMBL" id="CP000720">
    <property type="protein sequence ID" value="ABS49286.1"/>
    <property type="molecule type" value="Genomic_DNA"/>
</dbReference>
<dbReference type="RefSeq" id="WP_002210189.1">
    <property type="nucleotide sequence ID" value="NC_009708.1"/>
</dbReference>
<dbReference type="SMR" id="A7FMS6"/>
<dbReference type="GeneID" id="57975214"/>
<dbReference type="KEGG" id="ypi:YpsIP31758_3600"/>
<dbReference type="HOGENOM" id="CLU_016950_7_0_6"/>
<dbReference type="Proteomes" id="UP000002412">
    <property type="component" value="Chromosome"/>
</dbReference>
<dbReference type="GO" id="GO:0005829">
    <property type="term" value="C:cytosol"/>
    <property type="evidence" value="ECO:0007669"/>
    <property type="project" value="TreeGrafter"/>
</dbReference>
<dbReference type="GO" id="GO:0000287">
    <property type="term" value="F:magnesium ion binding"/>
    <property type="evidence" value="ECO:0007669"/>
    <property type="project" value="UniProtKB-UniRule"/>
</dbReference>
<dbReference type="GO" id="GO:0008966">
    <property type="term" value="F:phosphoglucosamine mutase activity"/>
    <property type="evidence" value="ECO:0007669"/>
    <property type="project" value="UniProtKB-UniRule"/>
</dbReference>
<dbReference type="GO" id="GO:0004615">
    <property type="term" value="F:phosphomannomutase activity"/>
    <property type="evidence" value="ECO:0007669"/>
    <property type="project" value="TreeGrafter"/>
</dbReference>
<dbReference type="GO" id="GO:0005975">
    <property type="term" value="P:carbohydrate metabolic process"/>
    <property type="evidence" value="ECO:0007669"/>
    <property type="project" value="InterPro"/>
</dbReference>
<dbReference type="GO" id="GO:0009252">
    <property type="term" value="P:peptidoglycan biosynthetic process"/>
    <property type="evidence" value="ECO:0007669"/>
    <property type="project" value="TreeGrafter"/>
</dbReference>
<dbReference type="GO" id="GO:0006048">
    <property type="term" value="P:UDP-N-acetylglucosamine biosynthetic process"/>
    <property type="evidence" value="ECO:0007669"/>
    <property type="project" value="TreeGrafter"/>
</dbReference>
<dbReference type="CDD" id="cd05802">
    <property type="entry name" value="GlmM"/>
    <property type="match status" value="1"/>
</dbReference>
<dbReference type="FunFam" id="3.30.310.50:FF:000001">
    <property type="entry name" value="Phosphoglucosamine mutase"/>
    <property type="match status" value="1"/>
</dbReference>
<dbReference type="FunFam" id="3.40.120.10:FF:000001">
    <property type="entry name" value="Phosphoglucosamine mutase"/>
    <property type="match status" value="1"/>
</dbReference>
<dbReference type="FunFam" id="3.40.120.10:FF:000002">
    <property type="entry name" value="Phosphoglucosamine mutase"/>
    <property type="match status" value="1"/>
</dbReference>
<dbReference type="Gene3D" id="3.40.120.10">
    <property type="entry name" value="Alpha-D-Glucose-1,6-Bisphosphate, subunit A, domain 3"/>
    <property type="match status" value="3"/>
</dbReference>
<dbReference type="Gene3D" id="3.30.310.50">
    <property type="entry name" value="Alpha-D-phosphohexomutase, C-terminal domain"/>
    <property type="match status" value="1"/>
</dbReference>
<dbReference type="HAMAP" id="MF_01554_B">
    <property type="entry name" value="GlmM_B"/>
    <property type="match status" value="1"/>
</dbReference>
<dbReference type="InterPro" id="IPR005844">
    <property type="entry name" value="A-D-PHexomutase_a/b/a-I"/>
</dbReference>
<dbReference type="InterPro" id="IPR016055">
    <property type="entry name" value="A-D-PHexomutase_a/b/a-I/II/III"/>
</dbReference>
<dbReference type="InterPro" id="IPR005845">
    <property type="entry name" value="A-D-PHexomutase_a/b/a-II"/>
</dbReference>
<dbReference type="InterPro" id="IPR005846">
    <property type="entry name" value="A-D-PHexomutase_a/b/a-III"/>
</dbReference>
<dbReference type="InterPro" id="IPR005843">
    <property type="entry name" value="A-D-PHexomutase_C"/>
</dbReference>
<dbReference type="InterPro" id="IPR036900">
    <property type="entry name" value="A-D-PHexomutase_C_sf"/>
</dbReference>
<dbReference type="InterPro" id="IPR016066">
    <property type="entry name" value="A-D-PHexomutase_CS"/>
</dbReference>
<dbReference type="InterPro" id="IPR005841">
    <property type="entry name" value="Alpha-D-phosphohexomutase_SF"/>
</dbReference>
<dbReference type="InterPro" id="IPR006352">
    <property type="entry name" value="GlmM_bact"/>
</dbReference>
<dbReference type="InterPro" id="IPR050060">
    <property type="entry name" value="Phosphoglucosamine_mutase"/>
</dbReference>
<dbReference type="NCBIfam" id="TIGR01455">
    <property type="entry name" value="glmM"/>
    <property type="match status" value="1"/>
</dbReference>
<dbReference type="NCBIfam" id="NF008139">
    <property type="entry name" value="PRK10887.1"/>
    <property type="match status" value="1"/>
</dbReference>
<dbReference type="PANTHER" id="PTHR42946:SF1">
    <property type="entry name" value="PHOSPHOGLUCOMUTASE (ALPHA-D-GLUCOSE-1,6-BISPHOSPHATE-DEPENDENT)"/>
    <property type="match status" value="1"/>
</dbReference>
<dbReference type="PANTHER" id="PTHR42946">
    <property type="entry name" value="PHOSPHOHEXOSE MUTASE"/>
    <property type="match status" value="1"/>
</dbReference>
<dbReference type="Pfam" id="PF02878">
    <property type="entry name" value="PGM_PMM_I"/>
    <property type="match status" value="1"/>
</dbReference>
<dbReference type="Pfam" id="PF02879">
    <property type="entry name" value="PGM_PMM_II"/>
    <property type="match status" value="1"/>
</dbReference>
<dbReference type="Pfam" id="PF02880">
    <property type="entry name" value="PGM_PMM_III"/>
    <property type="match status" value="1"/>
</dbReference>
<dbReference type="Pfam" id="PF00408">
    <property type="entry name" value="PGM_PMM_IV"/>
    <property type="match status" value="1"/>
</dbReference>
<dbReference type="PRINTS" id="PR00509">
    <property type="entry name" value="PGMPMM"/>
</dbReference>
<dbReference type="SUPFAM" id="SSF55957">
    <property type="entry name" value="Phosphoglucomutase, C-terminal domain"/>
    <property type="match status" value="1"/>
</dbReference>
<dbReference type="SUPFAM" id="SSF53738">
    <property type="entry name" value="Phosphoglucomutase, first 3 domains"/>
    <property type="match status" value="3"/>
</dbReference>
<dbReference type="PROSITE" id="PS00710">
    <property type="entry name" value="PGM_PMM"/>
    <property type="match status" value="1"/>
</dbReference>
<name>GLMM_YERP3</name>
<organism>
    <name type="scientific">Yersinia pseudotuberculosis serotype O:1b (strain IP 31758)</name>
    <dbReference type="NCBI Taxonomy" id="349747"/>
    <lineage>
        <taxon>Bacteria</taxon>
        <taxon>Pseudomonadati</taxon>
        <taxon>Pseudomonadota</taxon>
        <taxon>Gammaproteobacteria</taxon>
        <taxon>Enterobacterales</taxon>
        <taxon>Yersiniaceae</taxon>
        <taxon>Yersinia</taxon>
    </lineage>
</organism>